<keyword id="KW-0997">Cell inner membrane</keyword>
<keyword id="KW-1003">Cell membrane</keyword>
<keyword id="KW-0472">Membrane</keyword>
<keyword id="KW-0812">Transmembrane</keyword>
<keyword id="KW-1133">Transmembrane helix</keyword>
<keyword id="KW-0813">Transport</keyword>
<organism>
    <name type="scientific">Escherichia coli (strain K12 / MC4100 / BW2952)</name>
    <dbReference type="NCBI Taxonomy" id="595496"/>
    <lineage>
        <taxon>Bacteria</taxon>
        <taxon>Pseudomonadati</taxon>
        <taxon>Pseudomonadota</taxon>
        <taxon>Gammaproteobacteria</taxon>
        <taxon>Enterobacterales</taxon>
        <taxon>Enterobacteriaceae</taxon>
        <taxon>Escherichia</taxon>
    </lineage>
</organism>
<accession>C4ZSG3</accession>
<reference key="1">
    <citation type="journal article" date="2009" name="J. Bacteriol.">
        <title>Genomic sequencing reveals regulatory mutations and recombinational events in the widely used MC4100 lineage of Escherichia coli K-12.</title>
        <authorList>
            <person name="Ferenci T."/>
            <person name="Zhou Z."/>
            <person name="Betteridge T."/>
            <person name="Ren Y."/>
            <person name="Liu Y."/>
            <person name="Feng L."/>
            <person name="Reeves P.R."/>
            <person name="Wang L."/>
        </authorList>
    </citation>
    <scope>NUCLEOTIDE SEQUENCE [LARGE SCALE GENOMIC DNA]</scope>
    <source>
        <strain>K12 / MC4100 / BW2952</strain>
    </source>
</reference>
<comment type="function">
    <text evidence="1">The MdtABC tripartite complex confers resistance against novobiocin and deoxycholate.</text>
</comment>
<comment type="subunit">
    <text evidence="1">Part of a tripartite efflux system composed of MdtA, MdtB and MdtC. MdtB forms a heteromultimer with MdtC.</text>
</comment>
<comment type="subcellular location">
    <subcellularLocation>
        <location evidence="1">Cell inner membrane</location>
        <topology evidence="1">Multi-pass membrane protein</topology>
    </subcellularLocation>
</comment>
<comment type="induction">
    <text>The mdtABC operon is transcriptionally activated by BaeR.</text>
</comment>
<comment type="similarity">
    <text evidence="1">Belongs to the resistance-nodulation-cell division (RND) (TC 2.A.6) family. MdtB subfamily.</text>
</comment>
<evidence type="ECO:0000255" key="1">
    <source>
        <dbReference type="HAMAP-Rule" id="MF_01423"/>
    </source>
</evidence>
<name>MDTB_ECOBW</name>
<sequence>MQVLPPSSTGGPSRLFIMRPVATTLLMVAILLAGIIGYRALPVSALPEVDYPTIQVVTLYPGASPDVMTSAVTAPLERQFGQMSGLKQMSSQSSGGASVITLQFQLTLPLDVAEQEVQAAINAATNLLPSDLPNPPVYSKVNPADPPIMTLAVTSTAMPMTQVEDMVETRVAQKISQISGVGLVTLSGGQRPAVRVKLNAQAIAALGLTSETVRTAITGANVNSAKGSLDGPSRAVTLSANDQMQSAEEYRQLIIAYQNGAPIRLGDVATVEQGAENSWLGAWANKEQAIVMNVQRQPGANIISTADSIRQMLPQLTESLPKSVKVTVLSDRTTNIRASVDDTQFELMMAIALVVMIIYLFLRNIPATIIPGVAVPLSLIGTFAVMVFLDFSINNLTLMALTIATGFVVDDAIVVIENISRYIEKGEKPLAAALKGAGEIGFTIISLTFSLIAVLIPLLFMGDIVGRLFREFAITLAVAILISAVVSLTLTPMMCARMLSQESLRKQNRFSRASEKMFDRIIAAYGRGLAKVLNHPWLTLSVALSTLLLSVLLWVFIPKGFFPVQDNGIIQGTLQAPQSSSFANMAQRQRQVADVILQDPAVQSLTSFVGVDGTNPSLNSARLQINLKPLDERDDRVQKVIARLQTAVDKVPGVDLFLQPTQDLTIDTQVSRTQYQFTLQATSLDALSTWVPQLMEKLQQLPQLSDVSSDWQDKGLVAYVNVDRDSASRLGISMADVDNALYNAFGQRLISTIYTQANQYRVVLEHNTENTPGLAALDTIRLTSSDGGVVPLSSIAKIEQRFAPLSINHLDQFPVTTISFNVPDNYSLGDAVQAIMDTEKTLNLPVDITTQFQGSTLAFQSALGSTVWLIVAAVVAMYIVLGILYESFIHPITILSTLPTAGVGALLALLIAGSELDVIAIIGIILLIGIVKKNAIMMIDFALAAEREQGMSPREAIYQACLLRFRPILMTTLAALLGALPLMLSTGVGAELRRPLGIGMVGGLIVSQVLTLFTTPVIYLLFDRLALWTKSRFARHEEEA</sequence>
<dbReference type="EMBL" id="CP001396">
    <property type="protein sequence ID" value="ACR63821.1"/>
    <property type="molecule type" value="Genomic_DNA"/>
</dbReference>
<dbReference type="RefSeq" id="WP_001197875.1">
    <property type="nucleotide sequence ID" value="NC_012759.1"/>
</dbReference>
<dbReference type="SMR" id="C4ZSG3"/>
<dbReference type="KEGG" id="ebw:BWG_1865"/>
<dbReference type="HOGENOM" id="CLU_002755_1_2_6"/>
<dbReference type="GO" id="GO:0005886">
    <property type="term" value="C:plasma membrane"/>
    <property type="evidence" value="ECO:0007669"/>
    <property type="project" value="UniProtKB-SubCell"/>
</dbReference>
<dbReference type="GO" id="GO:0042910">
    <property type="term" value="F:xenobiotic transmembrane transporter activity"/>
    <property type="evidence" value="ECO:0007669"/>
    <property type="project" value="TreeGrafter"/>
</dbReference>
<dbReference type="FunFam" id="1.20.1640.10:FF:000001">
    <property type="entry name" value="Efflux pump membrane transporter"/>
    <property type="match status" value="1"/>
</dbReference>
<dbReference type="FunFam" id="3.30.70.1430:FF:000001">
    <property type="entry name" value="Efflux pump membrane transporter"/>
    <property type="match status" value="1"/>
</dbReference>
<dbReference type="FunFam" id="3.30.2090.10:FF:000003">
    <property type="entry name" value="Multidrug resistance protein MdtB"/>
    <property type="match status" value="1"/>
</dbReference>
<dbReference type="FunFam" id="3.30.2090.10:FF:000006">
    <property type="entry name" value="Multidrug resistance protein MdtB"/>
    <property type="match status" value="1"/>
</dbReference>
<dbReference type="Gene3D" id="3.30.70.1430">
    <property type="entry name" value="Multidrug efflux transporter AcrB pore domain"/>
    <property type="match status" value="2"/>
</dbReference>
<dbReference type="Gene3D" id="3.30.70.1440">
    <property type="entry name" value="Multidrug efflux transporter AcrB pore domain"/>
    <property type="match status" value="1"/>
</dbReference>
<dbReference type="Gene3D" id="3.30.70.1320">
    <property type="entry name" value="Multidrug efflux transporter AcrB pore domain like"/>
    <property type="match status" value="1"/>
</dbReference>
<dbReference type="Gene3D" id="3.30.2090.10">
    <property type="entry name" value="Multidrug efflux transporter AcrB TolC docking domain, DN and DC subdomains"/>
    <property type="match status" value="2"/>
</dbReference>
<dbReference type="Gene3D" id="1.20.1640.10">
    <property type="entry name" value="Multidrug efflux transporter AcrB transmembrane domain"/>
    <property type="match status" value="2"/>
</dbReference>
<dbReference type="HAMAP" id="MF_01423">
    <property type="entry name" value="MdtB"/>
    <property type="match status" value="1"/>
</dbReference>
<dbReference type="InterPro" id="IPR027463">
    <property type="entry name" value="AcrB_DN_DC_subdom"/>
</dbReference>
<dbReference type="InterPro" id="IPR001036">
    <property type="entry name" value="Acrflvin-R"/>
</dbReference>
<dbReference type="InterPro" id="IPR022831">
    <property type="entry name" value="Multidrug-R_MdtB"/>
</dbReference>
<dbReference type="NCBIfam" id="NF007798">
    <property type="entry name" value="PRK10503.1"/>
    <property type="match status" value="1"/>
</dbReference>
<dbReference type="NCBIfam" id="NF033617">
    <property type="entry name" value="RND_permease_2"/>
    <property type="match status" value="1"/>
</dbReference>
<dbReference type="PANTHER" id="PTHR32063">
    <property type="match status" value="1"/>
</dbReference>
<dbReference type="PANTHER" id="PTHR32063:SF21">
    <property type="entry name" value="MULTIDRUG RESISTANCE PROTEIN MDTB"/>
    <property type="match status" value="1"/>
</dbReference>
<dbReference type="Pfam" id="PF00873">
    <property type="entry name" value="ACR_tran"/>
    <property type="match status" value="1"/>
</dbReference>
<dbReference type="PRINTS" id="PR00702">
    <property type="entry name" value="ACRIFLAVINRP"/>
</dbReference>
<dbReference type="SUPFAM" id="SSF82693">
    <property type="entry name" value="Multidrug efflux transporter AcrB pore domain, PN1, PN2, PC1 and PC2 subdomains"/>
    <property type="match status" value="3"/>
</dbReference>
<dbReference type="SUPFAM" id="SSF82714">
    <property type="entry name" value="Multidrug efflux transporter AcrB TolC docking domain, DN and DC subdomains"/>
    <property type="match status" value="2"/>
</dbReference>
<dbReference type="SUPFAM" id="SSF82866">
    <property type="entry name" value="Multidrug efflux transporter AcrB transmembrane domain"/>
    <property type="match status" value="2"/>
</dbReference>
<feature type="chain" id="PRO_1000215261" description="Multidrug resistance protein MdtB">
    <location>
        <begin position="1"/>
        <end position="1040"/>
    </location>
</feature>
<feature type="transmembrane region" description="Helical" evidence="1">
    <location>
        <begin position="16"/>
        <end position="36"/>
    </location>
</feature>
<feature type="transmembrane region" description="Helical" evidence="1">
    <location>
        <begin position="347"/>
        <end position="367"/>
    </location>
</feature>
<feature type="transmembrane region" description="Helical" evidence="1">
    <location>
        <begin position="369"/>
        <end position="389"/>
    </location>
</feature>
<feature type="transmembrane region" description="Helical" evidence="1">
    <location>
        <begin position="396"/>
        <end position="416"/>
    </location>
</feature>
<feature type="transmembrane region" description="Helical" evidence="1">
    <location>
        <begin position="440"/>
        <end position="460"/>
    </location>
</feature>
<feature type="transmembrane region" description="Helical" evidence="1">
    <location>
        <begin position="472"/>
        <end position="492"/>
    </location>
</feature>
<feature type="transmembrane region" description="Helical" evidence="1">
    <location>
        <begin position="537"/>
        <end position="557"/>
    </location>
</feature>
<feature type="transmembrane region" description="Helical" evidence="1">
    <location>
        <begin position="863"/>
        <end position="883"/>
    </location>
</feature>
<feature type="transmembrane region" description="Helical" evidence="1">
    <location>
        <begin position="888"/>
        <end position="908"/>
    </location>
</feature>
<feature type="transmembrane region" description="Helical" evidence="1">
    <location>
        <begin position="911"/>
        <end position="931"/>
    </location>
</feature>
<feature type="transmembrane region" description="Helical" evidence="1">
    <location>
        <begin position="968"/>
        <end position="988"/>
    </location>
</feature>
<feature type="transmembrane region" description="Helical" evidence="1">
    <location>
        <begin position="998"/>
        <end position="1018"/>
    </location>
</feature>
<protein>
    <recommendedName>
        <fullName evidence="1">Multidrug resistance protein MdtB</fullName>
    </recommendedName>
    <alternativeName>
        <fullName evidence="1">Multidrug transporter MdtB</fullName>
    </alternativeName>
</protein>
<proteinExistence type="evidence at transcript level"/>
<gene>
    <name evidence="1" type="primary">mdtB</name>
    <name type="ordered locus">BWG_1865</name>
</gene>